<reference key="1">
    <citation type="journal article" date="2008" name="Genome Res.">
        <title>Comparative genome analysis of Salmonella enteritidis PT4 and Salmonella gallinarum 287/91 provides insights into evolutionary and host adaptation pathways.</title>
        <authorList>
            <person name="Thomson N.R."/>
            <person name="Clayton D.J."/>
            <person name="Windhorst D."/>
            <person name="Vernikos G."/>
            <person name="Davidson S."/>
            <person name="Churcher C."/>
            <person name="Quail M.A."/>
            <person name="Stevens M."/>
            <person name="Jones M.A."/>
            <person name="Watson M."/>
            <person name="Barron A."/>
            <person name="Layton A."/>
            <person name="Pickard D."/>
            <person name="Kingsley R.A."/>
            <person name="Bignell A."/>
            <person name="Clark L."/>
            <person name="Harris B."/>
            <person name="Ormond D."/>
            <person name="Abdellah Z."/>
            <person name="Brooks K."/>
            <person name="Cherevach I."/>
            <person name="Chillingworth T."/>
            <person name="Woodward J."/>
            <person name="Norberczak H."/>
            <person name="Lord A."/>
            <person name="Arrowsmith C."/>
            <person name="Jagels K."/>
            <person name="Moule S."/>
            <person name="Mungall K."/>
            <person name="Saunders M."/>
            <person name="Whitehead S."/>
            <person name="Chabalgoity J.A."/>
            <person name="Maskell D."/>
            <person name="Humphreys T."/>
            <person name="Roberts M."/>
            <person name="Barrow P.A."/>
            <person name="Dougan G."/>
            <person name="Parkhill J."/>
        </authorList>
    </citation>
    <scope>NUCLEOTIDE SEQUENCE [LARGE SCALE GENOMIC DNA]</scope>
    <source>
        <strain>287/91 / NCTC 13346</strain>
    </source>
</reference>
<gene>
    <name evidence="1" type="primary">grpE</name>
    <name type="ordered locus">SG2659</name>
</gene>
<keyword id="KW-0143">Chaperone</keyword>
<keyword id="KW-0963">Cytoplasm</keyword>
<keyword id="KW-0346">Stress response</keyword>
<organism>
    <name type="scientific">Salmonella gallinarum (strain 287/91 / NCTC 13346)</name>
    <dbReference type="NCBI Taxonomy" id="550538"/>
    <lineage>
        <taxon>Bacteria</taxon>
        <taxon>Pseudomonadati</taxon>
        <taxon>Pseudomonadota</taxon>
        <taxon>Gammaproteobacteria</taxon>
        <taxon>Enterobacterales</taxon>
        <taxon>Enterobacteriaceae</taxon>
        <taxon>Salmonella</taxon>
    </lineage>
</organism>
<name>GRPE_SALG2</name>
<evidence type="ECO:0000255" key="1">
    <source>
        <dbReference type="HAMAP-Rule" id="MF_01151"/>
    </source>
</evidence>
<evidence type="ECO:0000256" key="2">
    <source>
        <dbReference type="SAM" id="MobiDB-lite"/>
    </source>
</evidence>
<dbReference type="EMBL" id="AM933173">
    <property type="protein sequence ID" value="CAR38476.1"/>
    <property type="molecule type" value="Genomic_DNA"/>
</dbReference>
<dbReference type="RefSeq" id="WP_001674999.1">
    <property type="nucleotide sequence ID" value="NC_011274.1"/>
</dbReference>
<dbReference type="SMR" id="B5RD90"/>
<dbReference type="KEGG" id="seg:SG2659"/>
<dbReference type="HOGENOM" id="CLU_057217_6_0_6"/>
<dbReference type="Proteomes" id="UP000008321">
    <property type="component" value="Chromosome"/>
</dbReference>
<dbReference type="GO" id="GO:0005829">
    <property type="term" value="C:cytosol"/>
    <property type="evidence" value="ECO:0007669"/>
    <property type="project" value="TreeGrafter"/>
</dbReference>
<dbReference type="GO" id="GO:0000774">
    <property type="term" value="F:adenyl-nucleotide exchange factor activity"/>
    <property type="evidence" value="ECO:0007669"/>
    <property type="project" value="InterPro"/>
</dbReference>
<dbReference type="GO" id="GO:0042803">
    <property type="term" value="F:protein homodimerization activity"/>
    <property type="evidence" value="ECO:0007669"/>
    <property type="project" value="InterPro"/>
</dbReference>
<dbReference type="GO" id="GO:0051087">
    <property type="term" value="F:protein-folding chaperone binding"/>
    <property type="evidence" value="ECO:0007669"/>
    <property type="project" value="InterPro"/>
</dbReference>
<dbReference type="GO" id="GO:0051082">
    <property type="term" value="F:unfolded protein binding"/>
    <property type="evidence" value="ECO:0007669"/>
    <property type="project" value="TreeGrafter"/>
</dbReference>
<dbReference type="GO" id="GO:0006457">
    <property type="term" value="P:protein folding"/>
    <property type="evidence" value="ECO:0007669"/>
    <property type="project" value="InterPro"/>
</dbReference>
<dbReference type="CDD" id="cd00446">
    <property type="entry name" value="GrpE"/>
    <property type="match status" value="1"/>
</dbReference>
<dbReference type="FunFam" id="2.30.22.10:FF:000001">
    <property type="entry name" value="Protein GrpE"/>
    <property type="match status" value="1"/>
</dbReference>
<dbReference type="FunFam" id="3.90.20.20:FF:000001">
    <property type="entry name" value="Protein GrpE"/>
    <property type="match status" value="1"/>
</dbReference>
<dbReference type="Gene3D" id="3.90.20.20">
    <property type="match status" value="1"/>
</dbReference>
<dbReference type="Gene3D" id="2.30.22.10">
    <property type="entry name" value="Head domain of nucleotide exchange factor GrpE"/>
    <property type="match status" value="1"/>
</dbReference>
<dbReference type="HAMAP" id="MF_01151">
    <property type="entry name" value="GrpE"/>
    <property type="match status" value="1"/>
</dbReference>
<dbReference type="InterPro" id="IPR000740">
    <property type="entry name" value="GrpE"/>
</dbReference>
<dbReference type="InterPro" id="IPR013805">
    <property type="entry name" value="GrpE_coiled_coil"/>
</dbReference>
<dbReference type="InterPro" id="IPR009012">
    <property type="entry name" value="GrpE_head"/>
</dbReference>
<dbReference type="NCBIfam" id="NF007655">
    <property type="entry name" value="PRK10325.1"/>
    <property type="match status" value="1"/>
</dbReference>
<dbReference type="NCBIfam" id="NF010738">
    <property type="entry name" value="PRK14140.1"/>
    <property type="match status" value="1"/>
</dbReference>
<dbReference type="NCBIfam" id="NF010748">
    <property type="entry name" value="PRK14150.1"/>
    <property type="match status" value="1"/>
</dbReference>
<dbReference type="PANTHER" id="PTHR21237">
    <property type="entry name" value="GRPE PROTEIN"/>
    <property type="match status" value="1"/>
</dbReference>
<dbReference type="PANTHER" id="PTHR21237:SF23">
    <property type="entry name" value="GRPE PROTEIN HOMOLOG, MITOCHONDRIAL"/>
    <property type="match status" value="1"/>
</dbReference>
<dbReference type="Pfam" id="PF01025">
    <property type="entry name" value="GrpE"/>
    <property type="match status" value="1"/>
</dbReference>
<dbReference type="PRINTS" id="PR00773">
    <property type="entry name" value="GRPEPROTEIN"/>
</dbReference>
<dbReference type="SUPFAM" id="SSF58014">
    <property type="entry name" value="Coiled-coil domain of nucleotide exchange factor GrpE"/>
    <property type="match status" value="1"/>
</dbReference>
<dbReference type="SUPFAM" id="SSF51064">
    <property type="entry name" value="Head domain of nucleotide exchange factor GrpE"/>
    <property type="match status" value="1"/>
</dbReference>
<protein>
    <recommendedName>
        <fullName evidence="1">Protein GrpE</fullName>
    </recommendedName>
    <alternativeName>
        <fullName evidence="1">HSP-70 cofactor</fullName>
    </alternativeName>
</protein>
<comment type="function">
    <text evidence="1">Participates actively in the response to hyperosmotic and heat shock by preventing the aggregation of stress-denatured proteins, in association with DnaK and GrpE. It is the nucleotide exchange factor for DnaK and may function as a thermosensor. Unfolded proteins bind initially to DnaJ; upon interaction with the DnaJ-bound protein, DnaK hydrolyzes its bound ATP, resulting in the formation of a stable complex. GrpE releases ADP from DnaK; ATP binding to DnaK triggers the release of the substrate protein, thus completing the reaction cycle. Several rounds of ATP-dependent interactions between DnaJ, DnaK and GrpE are required for fully efficient folding.</text>
</comment>
<comment type="subunit">
    <text evidence="1">Homodimer.</text>
</comment>
<comment type="subcellular location">
    <subcellularLocation>
        <location evidence="1">Cytoplasm</location>
    </subcellularLocation>
</comment>
<comment type="similarity">
    <text evidence="1">Belongs to the GrpE family.</text>
</comment>
<accession>B5RD90</accession>
<proteinExistence type="inferred from homology"/>
<feature type="chain" id="PRO_1000137610" description="Protein GrpE">
    <location>
        <begin position="1"/>
        <end position="196"/>
    </location>
</feature>
<feature type="region of interest" description="Disordered" evidence="2">
    <location>
        <begin position="1"/>
        <end position="40"/>
    </location>
</feature>
<sequence>MSSKEQKTPEGQAPEEIIMDQHEEVEAVEPNDSAEQVDPRDEKIANLEVQLAEAQTRERDTVLRIKAEMENLRRRTEQDIEKAHKFALEKFVNELLPVIDSLDRALEVADKANPDMAAMVEGIELTLKSMLDVVRKFGVEVIAETNVPMDPNVHQAIAMVESEEVPAGNVLGIMQKGYTLNGRTIRAAMVTVAKAK</sequence>